<feature type="chain" id="PRO_0000442944" description="Propane 2-monooxygenase, reductase component">
    <location>
        <begin position="1"/>
        <end position="348"/>
    </location>
</feature>
<feature type="domain" description="2Fe-2S ferredoxin-type" evidence="2">
    <location>
        <begin position="5"/>
        <end position="95"/>
    </location>
</feature>
<feature type="domain" description="FAD-binding FR-type" evidence="3">
    <location>
        <begin position="105"/>
        <end position="206"/>
    </location>
</feature>
<feature type="binding site" evidence="2">
    <location>
        <position position="39"/>
    </location>
    <ligand>
        <name>[2Fe-2S] cluster</name>
        <dbReference type="ChEBI" id="CHEBI:190135"/>
    </ligand>
</feature>
<feature type="binding site" evidence="2">
    <location>
        <position position="44"/>
    </location>
    <ligand>
        <name>[2Fe-2S] cluster</name>
        <dbReference type="ChEBI" id="CHEBI:190135"/>
    </ligand>
</feature>
<feature type="binding site" evidence="2">
    <location>
        <position position="47"/>
    </location>
    <ligand>
        <name>[2Fe-2S] cluster</name>
        <dbReference type="ChEBI" id="CHEBI:190135"/>
    </ligand>
</feature>
<feature type="binding site" evidence="2">
    <location>
        <position position="79"/>
    </location>
    <ligand>
        <name>[2Fe-2S] cluster</name>
        <dbReference type="ChEBI" id="CHEBI:190135"/>
    </ligand>
</feature>
<gene>
    <name evidence="6" type="primary">mimB</name>
</gene>
<organism>
    <name type="scientific">Mycolicibacterium goodii</name>
    <name type="common">Mycobacterium goodii</name>
    <dbReference type="NCBI Taxonomy" id="134601"/>
    <lineage>
        <taxon>Bacteria</taxon>
        <taxon>Bacillati</taxon>
        <taxon>Actinomycetota</taxon>
        <taxon>Actinomycetes</taxon>
        <taxon>Mycobacteriales</taxon>
        <taxon>Mycobacteriaceae</taxon>
        <taxon>Mycolicibacterium</taxon>
    </lineage>
</organism>
<keyword id="KW-0001">2Fe-2S</keyword>
<keyword id="KW-0274">FAD</keyword>
<keyword id="KW-0285">Flavoprotein</keyword>
<keyword id="KW-0408">Iron</keyword>
<keyword id="KW-0411">Iron-sulfur</keyword>
<keyword id="KW-0479">Metal-binding</keyword>
<keyword id="KW-0560">Oxidoreductase</keyword>
<name>MIMB_MYCGD</name>
<accession>E9RFT0</accession>
<proteinExistence type="evidence at protein level"/>
<protein>
    <recommendedName>
        <fullName evidence="6">Propane 2-monooxygenase, reductase component</fullName>
        <ecNumber evidence="7">1.18.1.-</ecNumber>
    </recommendedName>
</protein>
<reference key="1">
    <citation type="journal article" date="2011" name="Appl. Environ. Microbiol.">
        <title>Identification of the monooxygenase gene clusters responsible for the regioselective oxidation of phenol to hydroquinone in mycobacteria.</title>
        <authorList>
            <person name="Furuya T."/>
            <person name="Hirose S."/>
            <person name="Osanai H."/>
            <person name="Semba H."/>
            <person name="Kino K."/>
        </authorList>
    </citation>
    <scope>NUCLEOTIDE SEQUENCE [GENOMIC DNA]</scope>
    <scope>FUNCTION</scope>
    <scope>INDUCTION BY ACETONE</scope>
    <scope>SUBUNIT</scope>
    <source>
        <strain evidence="9">12523</strain>
    </source>
</reference>
<reference key="2">
    <citation type="journal article" date="2011" name="J. Bacteriol.">
        <title>Identification of the regulator gene responsible for the acetone-responsive expression of the binuclear iron monooxygenase gene cluster in mycobacteria.</title>
        <authorList>
            <person name="Furuya T."/>
            <person name="Hirose S."/>
            <person name="Semba H."/>
            <person name="Kino K."/>
        </authorList>
    </citation>
    <scope>INDUCTION BY MIMR</scope>
    <source>
        <strain>12523</strain>
    </source>
</reference>
<evidence type="ECO:0000250" key="1">
    <source>
        <dbReference type="UniProtKB" id="Q03304"/>
    </source>
</evidence>
<evidence type="ECO:0000255" key="2">
    <source>
        <dbReference type="PROSITE-ProRule" id="PRU00465"/>
    </source>
</evidence>
<evidence type="ECO:0000255" key="3">
    <source>
        <dbReference type="PROSITE-ProRule" id="PRU00716"/>
    </source>
</evidence>
<evidence type="ECO:0000269" key="4">
    <source>
    </source>
</evidence>
<evidence type="ECO:0000269" key="5">
    <source>
    </source>
</evidence>
<evidence type="ECO:0000303" key="6">
    <source>
    </source>
</evidence>
<evidence type="ECO:0000305" key="7"/>
<evidence type="ECO:0000305" key="8">
    <source>
    </source>
</evidence>
<evidence type="ECO:0000312" key="9">
    <source>
        <dbReference type="EMBL" id="BAJ76719.1"/>
    </source>
</evidence>
<comment type="function">
    <text evidence="4">Reductase component of the propane 2-monooxygenase multicomponent enzyme system which is involved in the degradation of propane via the O2-dependent hydroxylation of propane. Reductase catalyzes the transfer of electrons from NADH or NADPH to monooxygenase (Probable).</text>
</comment>
<comment type="cofactor">
    <cofactor evidence="1">
        <name>FAD</name>
        <dbReference type="ChEBI" id="CHEBI:57692"/>
    </cofactor>
</comment>
<comment type="cofactor">
    <cofactor evidence="2">
        <name>[2Fe-2S] cluster</name>
        <dbReference type="ChEBI" id="CHEBI:190135"/>
    </cofactor>
    <text evidence="2">Binds 1 2Fe-2S cluster.</text>
</comment>
<comment type="subunit">
    <text evidence="8">The propane 2-monooxygenase multicomponent enzyme system is composed of an electron transfer component and a monooxygenase component interacting with the effector protein MimD. The electron transfer component is composed of a reductase (MimB), and the monooxygenase component is formed by a large subunit (MimA) and a small subunit (MimC).</text>
</comment>
<comment type="induction">
    <text evidence="4 5">By acetone (PubMed:21183637). Transcriptionally activated by MimR (PubMed:21856847).</text>
</comment>
<comment type="similarity">
    <text evidence="7">Belongs to the bacterial ring-hydroxylating dioxygenase ferredoxin reductase family.</text>
</comment>
<sequence length="348" mass="38088">MADSHKINFEPVDIEMDVREDENILDAAFRQGIHLMHGCREGRCSACKSYVLDGEIQMENYSTFACNDAEVDEGFVLLCRSHAFSDCTIELLNFDEDELLGGIPIQDVRTEVLAVEPKTRDIVSLRLKPVEPGKFDFKPGQYADLHIPGTEEHRSFSMATTPSCSDEVEFLIKKYPGGKFSALLDGHIQVGDEIALTGPYGSFTLKDGHVLPVVCIGGGAGMAPILSLLRHMNETGNGRPARFYYGARTAADLFYLDEILELGKGIKDFQFIACLSESAEGQVPGAVAVEEGMVTDVVARHESAIAKTEVYLCGPPPMVDAALGFLDANSVPKDQVFYDSFTSPIFDQ</sequence>
<dbReference type="EC" id="1.18.1.-" evidence="7"/>
<dbReference type="EMBL" id="AB568291">
    <property type="protein sequence ID" value="BAJ76719.1"/>
    <property type="molecule type" value="Genomic_DNA"/>
</dbReference>
<dbReference type="RefSeq" id="WP_214387465.1">
    <property type="nucleotide sequence ID" value="NZ_JAHBOK010000013.1"/>
</dbReference>
<dbReference type="SMR" id="E9RFT0"/>
<dbReference type="STRING" id="134601.AFA91_29115"/>
<dbReference type="BioCyc" id="MetaCyc:MONOMER-19805"/>
<dbReference type="BRENDA" id="1.14.13.222">
    <property type="organism ID" value="13503"/>
</dbReference>
<dbReference type="GO" id="GO:0051537">
    <property type="term" value="F:2 iron, 2 sulfur cluster binding"/>
    <property type="evidence" value="ECO:0007669"/>
    <property type="project" value="UniProtKB-KW"/>
</dbReference>
<dbReference type="GO" id="GO:0046872">
    <property type="term" value="F:metal ion binding"/>
    <property type="evidence" value="ECO:0007669"/>
    <property type="project" value="UniProtKB-KW"/>
</dbReference>
<dbReference type="GO" id="GO:0016491">
    <property type="term" value="F:oxidoreductase activity"/>
    <property type="evidence" value="ECO:0007669"/>
    <property type="project" value="UniProtKB-KW"/>
</dbReference>
<dbReference type="CDD" id="cd00207">
    <property type="entry name" value="fer2"/>
    <property type="match status" value="1"/>
</dbReference>
<dbReference type="Gene3D" id="3.10.20.30">
    <property type="match status" value="1"/>
</dbReference>
<dbReference type="Gene3D" id="3.40.50.80">
    <property type="entry name" value="Nucleotide-binding domain of ferredoxin-NADP reductase (FNR) module"/>
    <property type="match status" value="1"/>
</dbReference>
<dbReference type="Gene3D" id="2.40.30.10">
    <property type="entry name" value="Translation factors"/>
    <property type="match status" value="1"/>
</dbReference>
<dbReference type="InterPro" id="IPR036010">
    <property type="entry name" value="2Fe-2S_ferredoxin-like_sf"/>
</dbReference>
<dbReference type="InterPro" id="IPR001041">
    <property type="entry name" value="2Fe-2S_ferredoxin-type"/>
</dbReference>
<dbReference type="InterPro" id="IPR006058">
    <property type="entry name" value="2Fe2S_fd_BS"/>
</dbReference>
<dbReference type="InterPro" id="IPR012675">
    <property type="entry name" value="Beta-grasp_dom_sf"/>
</dbReference>
<dbReference type="InterPro" id="IPR008333">
    <property type="entry name" value="Cbr1-like_FAD-bd_dom"/>
</dbReference>
<dbReference type="InterPro" id="IPR017927">
    <property type="entry name" value="FAD-bd_FR_type"/>
</dbReference>
<dbReference type="InterPro" id="IPR001709">
    <property type="entry name" value="Flavoprot_Pyr_Nucl_cyt_Rdtase"/>
</dbReference>
<dbReference type="InterPro" id="IPR039261">
    <property type="entry name" value="FNR_nucleotide-bd"/>
</dbReference>
<dbReference type="InterPro" id="IPR050415">
    <property type="entry name" value="MRET"/>
</dbReference>
<dbReference type="InterPro" id="IPR001433">
    <property type="entry name" value="OxRdtase_FAD/NAD-bd"/>
</dbReference>
<dbReference type="InterPro" id="IPR017938">
    <property type="entry name" value="Riboflavin_synthase-like_b-brl"/>
</dbReference>
<dbReference type="PANTHER" id="PTHR47354">
    <property type="entry name" value="NADH OXIDOREDUCTASE HCR"/>
    <property type="match status" value="1"/>
</dbReference>
<dbReference type="PANTHER" id="PTHR47354:SF5">
    <property type="entry name" value="PROTEIN RFBI"/>
    <property type="match status" value="1"/>
</dbReference>
<dbReference type="Pfam" id="PF00970">
    <property type="entry name" value="FAD_binding_6"/>
    <property type="match status" value="1"/>
</dbReference>
<dbReference type="Pfam" id="PF00111">
    <property type="entry name" value="Fer2"/>
    <property type="match status" value="1"/>
</dbReference>
<dbReference type="Pfam" id="PF00175">
    <property type="entry name" value="NAD_binding_1"/>
    <property type="match status" value="1"/>
</dbReference>
<dbReference type="PRINTS" id="PR00371">
    <property type="entry name" value="FPNCR"/>
</dbReference>
<dbReference type="PRINTS" id="PR00410">
    <property type="entry name" value="PHEHYDRXLASE"/>
</dbReference>
<dbReference type="SUPFAM" id="SSF54292">
    <property type="entry name" value="2Fe-2S ferredoxin-like"/>
    <property type="match status" value="1"/>
</dbReference>
<dbReference type="SUPFAM" id="SSF52343">
    <property type="entry name" value="Ferredoxin reductase-like, C-terminal NADP-linked domain"/>
    <property type="match status" value="1"/>
</dbReference>
<dbReference type="SUPFAM" id="SSF63380">
    <property type="entry name" value="Riboflavin synthase domain-like"/>
    <property type="match status" value="1"/>
</dbReference>
<dbReference type="PROSITE" id="PS00197">
    <property type="entry name" value="2FE2S_FER_1"/>
    <property type="match status" value="1"/>
</dbReference>
<dbReference type="PROSITE" id="PS51085">
    <property type="entry name" value="2FE2S_FER_2"/>
    <property type="match status" value="1"/>
</dbReference>
<dbReference type="PROSITE" id="PS51384">
    <property type="entry name" value="FAD_FR"/>
    <property type="match status" value="1"/>
</dbReference>